<proteinExistence type="inferred from homology"/>
<protein>
    <recommendedName>
        <fullName evidence="1">Adenosylhomocysteinase</fullName>
        <ecNumber evidence="1">3.13.2.1</ecNumber>
    </recommendedName>
    <alternativeName>
        <fullName evidence="1">S-adenosyl-L-homocysteine hydrolase</fullName>
        <shortName evidence="1">AdoHcyase</shortName>
    </alternativeName>
</protein>
<organism>
    <name type="scientific">Gloeothece citriformis (strain PCC 7424)</name>
    <name type="common">Cyanothece sp. (strain PCC 7424)</name>
    <dbReference type="NCBI Taxonomy" id="65393"/>
    <lineage>
        <taxon>Bacteria</taxon>
        <taxon>Bacillati</taxon>
        <taxon>Cyanobacteriota</taxon>
        <taxon>Cyanophyceae</taxon>
        <taxon>Oscillatoriophycideae</taxon>
        <taxon>Chroococcales</taxon>
        <taxon>Aphanothecaceae</taxon>
        <taxon>Gloeothece</taxon>
        <taxon>Gloeothece citriformis</taxon>
    </lineage>
</organism>
<name>SAHH_GLOC7</name>
<gene>
    <name evidence="1" type="primary">ahcY</name>
    <name type="ordered locus">PCC7424_4381</name>
</gene>
<evidence type="ECO:0000255" key="1">
    <source>
        <dbReference type="HAMAP-Rule" id="MF_00563"/>
    </source>
</evidence>
<accession>B7K8X6</accession>
<comment type="function">
    <text evidence="1">May play a key role in the regulation of the intracellular concentration of adenosylhomocysteine.</text>
</comment>
<comment type="catalytic activity">
    <reaction evidence="1">
        <text>S-adenosyl-L-homocysteine + H2O = L-homocysteine + adenosine</text>
        <dbReference type="Rhea" id="RHEA:21708"/>
        <dbReference type="ChEBI" id="CHEBI:15377"/>
        <dbReference type="ChEBI" id="CHEBI:16335"/>
        <dbReference type="ChEBI" id="CHEBI:57856"/>
        <dbReference type="ChEBI" id="CHEBI:58199"/>
        <dbReference type="EC" id="3.13.2.1"/>
    </reaction>
</comment>
<comment type="cofactor">
    <cofactor evidence="1">
        <name>NAD(+)</name>
        <dbReference type="ChEBI" id="CHEBI:57540"/>
    </cofactor>
    <text evidence="1">Binds 1 NAD(+) per subunit.</text>
</comment>
<comment type="pathway">
    <text evidence="1">Amino-acid biosynthesis; L-homocysteine biosynthesis; L-homocysteine from S-adenosyl-L-homocysteine: step 1/1.</text>
</comment>
<comment type="subcellular location">
    <subcellularLocation>
        <location evidence="1">Cytoplasm</location>
    </subcellularLocation>
</comment>
<comment type="similarity">
    <text evidence="1">Belongs to the adenosylhomocysteinase family.</text>
</comment>
<keyword id="KW-0963">Cytoplasm</keyword>
<keyword id="KW-0378">Hydrolase</keyword>
<keyword id="KW-0520">NAD</keyword>
<keyword id="KW-0554">One-carbon metabolism</keyword>
<keyword id="KW-1185">Reference proteome</keyword>
<dbReference type="EC" id="3.13.2.1" evidence="1"/>
<dbReference type="EMBL" id="CP001291">
    <property type="protein sequence ID" value="ACK72745.1"/>
    <property type="molecule type" value="Genomic_DNA"/>
</dbReference>
<dbReference type="RefSeq" id="WP_015956329.1">
    <property type="nucleotide sequence ID" value="NC_011729.1"/>
</dbReference>
<dbReference type="SMR" id="B7K8X6"/>
<dbReference type="STRING" id="65393.PCC7424_4381"/>
<dbReference type="KEGG" id="cyc:PCC7424_4381"/>
<dbReference type="eggNOG" id="COG0499">
    <property type="taxonomic scope" value="Bacteria"/>
</dbReference>
<dbReference type="HOGENOM" id="CLU_025194_2_1_3"/>
<dbReference type="OrthoDB" id="9802717at2"/>
<dbReference type="UniPathway" id="UPA00314">
    <property type="reaction ID" value="UER00076"/>
</dbReference>
<dbReference type="Proteomes" id="UP000002384">
    <property type="component" value="Chromosome"/>
</dbReference>
<dbReference type="GO" id="GO:0005829">
    <property type="term" value="C:cytosol"/>
    <property type="evidence" value="ECO:0007669"/>
    <property type="project" value="TreeGrafter"/>
</dbReference>
<dbReference type="GO" id="GO:0004013">
    <property type="term" value="F:adenosylhomocysteinase activity"/>
    <property type="evidence" value="ECO:0007669"/>
    <property type="project" value="UniProtKB-UniRule"/>
</dbReference>
<dbReference type="GO" id="GO:0071269">
    <property type="term" value="P:L-homocysteine biosynthetic process"/>
    <property type="evidence" value="ECO:0007669"/>
    <property type="project" value="UniProtKB-UniRule"/>
</dbReference>
<dbReference type="GO" id="GO:0006730">
    <property type="term" value="P:one-carbon metabolic process"/>
    <property type="evidence" value="ECO:0007669"/>
    <property type="project" value="UniProtKB-KW"/>
</dbReference>
<dbReference type="GO" id="GO:0033353">
    <property type="term" value="P:S-adenosylmethionine cycle"/>
    <property type="evidence" value="ECO:0007669"/>
    <property type="project" value="TreeGrafter"/>
</dbReference>
<dbReference type="CDD" id="cd00401">
    <property type="entry name" value="SAHH"/>
    <property type="match status" value="1"/>
</dbReference>
<dbReference type="FunFam" id="3.40.50.720:FF:000004">
    <property type="entry name" value="Adenosylhomocysteinase"/>
    <property type="match status" value="1"/>
</dbReference>
<dbReference type="Gene3D" id="3.40.50.1480">
    <property type="entry name" value="Adenosylhomocysteinase-like"/>
    <property type="match status" value="1"/>
</dbReference>
<dbReference type="Gene3D" id="3.40.50.720">
    <property type="entry name" value="NAD(P)-binding Rossmann-like Domain"/>
    <property type="match status" value="1"/>
</dbReference>
<dbReference type="HAMAP" id="MF_00563">
    <property type="entry name" value="AdoHcyase"/>
    <property type="match status" value="1"/>
</dbReference>
<dbReference type="InterPro" id="IPR042172">
    <property type="entry name" value="Adenosylhomocyst_ase-like_sf"/>
</dbReference>
<dbReference type="InterPro" id="IPR000043">
    <property type="entry name" value="Adenosylhomocysteinase-like"/>
</dbReference>
<dbReference type="InterPro" id="IPR015878">
    <property type="entry name" value="Ado_hCys_hydrolase_NAD-bd"/>
</dbReference>
<dbReference type="InterPro" id="IPR036291">
    <property type="entry name" value="NAD(P)-bd_dom_sf"/>
</dbReference>
<dbReference type="InterPro" id="IPR020082">
    <property type="entry name" value="S-Ado-L-homoCys_hydrolase_CS"/>
</dbReference>
<dbReference type="NCBIfam" id="TIGR00936">
    <property type="entry name" value="ahcY"/>
    <property type="match status" value="1"/>
</dbReference>
<dbReference type="NCBIfam" id="NF004005">
    <property type="entry name" value="PRK05476.2-3"/>
    <property type="match status" value="1"/>
</dbReference>
<dbReference type="PANTHER" id="PTHR23420">
    <property type="entry name" value="ADENOSYLHOMOCYSTEINASE"/>
    <property type="match status" value="1"/>
</dbReference>
<dbReference type="PANTHER" id="PTHR23420:SF0">
    <property type="entry name" value="ADENOSYLHOMOCYSTEINASE"/>
    <property type="match status" value="1"/>
</dbReference>
<dbReference type="Pfam" id="PF05221">
    <property type="entry name" value="AdoHcyase"/>
    <property type="match status" value="2"/>
</dbReference>
<dbReference type="Pfam" id="PF00670">
    <property type="entry name" value="AdoHcyase_NAD"/>
    <property type="match status" value="1"/>
</dbReference>
<dbReference type="PIRSF" id="PIRSF001109">
    <property type="entry name" value="Ad_hcy_hydrolase"/>
    <property type="match status" value="1"/>
</dbReference>
<dbReference type="SMART" id="SM00996">
    <property type="entry name" value="AdoHcyase"/>
    <property type="match status" value="1"/>
</dbReference>
<dbReference type="SMART" id="SM00997">
    <property type="entry name" value="AdoHcyase_NAD"/>
    <property type="match status" value="1"/>
</dbReference>
<dbReference type="SUPFAM" id="SSF52283">
    <property type="entry name" value="Formate/glycerate dehydrogenase catalytic domain-like"/>
    <property type="match status" value="1"/>
</dbReference>
<dbReference type="SUPFAM" id="SSF51735">
    <property type="entry name" value="NAD(P)-binding Rossmann-fold domains"/>
    <property type="match status" value="1"/>
</dbReference>
<dbReference type="PROSITE" id="PS00738">
    <property type="entry name" value="ADOHCYASE_1"/>
    <property type="match status" value="1"/>
</dbReference>
<dbReference type="PROSITE" id="PS00739">
    <property type="entry name" value="ADOHCYASE_2"/>
    <property type="match status" value="1"/>
</dbReference>
<feature type="chain" id="PRO_1000129281" description="Adenosylhomocysteinase">
    <location>
        <begin position="1"/>
        <end position="429"/>
    </location>
</feature>
<feature type="binding site" evidence="1">
    <location>
        <position position="64"/>
    </location>
    <ligand>
        <name>substrate</name>
    </ligand>
</feature>
<feature type="binding site" evidence="1">
    <location>
        <position position="136"/>
    </location>
    <ligand>
        <name>substrate</name>
    </ligand>
</feature>
<feature type="binding site" evidence="1">
    <location>
        <position position="161"/>
    </location>
    <ligand>
        <name>substrate</name>
    </ligand>
</feature>
<feature type="binding site" evidence="1">
    <location>
        <begin position="162"/>
        <end position="164"/>
    </location>
    <ligand>
        <name>NAD(+)</name>
        <dbReference type="ChEBI" id="CHEBI:57540"/>
    </ligand>
</feature>
<feature type="binding site" evidence="1">
    <location>
        <position position="191"/>
    </location>
    <ligand>
        <name>substrate</name>
    </ligand>
</feature>
<feature type="binding site" evidence="1">
    <location>
        <position position="195"/>
    </location>
    <ligand>
        <name>substrate</name>
    </ligand>
</feature>
<feature type="binding site" evidence="1">
    <location>
        <position position="196"/>
    </location>
    <ligand>
        <name>NAD(+)</name>
        <dbReference type="ChEBI" id="CHEBI:57540"/>
    </ligand>
</feature>
<feature type="binding site" evidence="1">
    <location>
        <begin position="225"/>
        <end position="230"/>
    </location>
    <ligand>
        <name>NAD(+)</name>
        <dbReference type="ChEBI" id="CHEBI:57540"/>
    </ligand>
</feature>
<feature type="binding site" evidence="1">
    <location>
        <position position="248"/>
    </location>
    <ligand>
        <name>NAD(+)</name>
        <dbReference type="ChEBI" id="CHEBI:57540"/>
    </ligand>
</feature>
<feature type="binding site" evidence="1">
    <location>
        <position position="283"/>
    </location>
    <ligand>
        <name>NAD(+)</name>
        <dbReference type="ChEBI" id="CHEBI:57540"/>
    </ligand>
</feature>
<feature type="binding site" evidence="1">
    <location>
        <begin position="304"/>
        <end position="306"/>
    </location>
    <ligand>
        <name>NAD(+)</name>
        <dbReference type="ChEBI" id="CHEBI:57540"/>
    </ligand>
</feature>
<feature type="binding site" evidence="1">
    <location>
        <position position="351"/>
    </location>
    <ligand>
        <name>NAD(+)</name>
        <dbReference type="ChEBI" id="CHEBI:57540"/>
    </ligand>
</feature>
<reference key="1">
    <citation type="journal article" date="2011" name="MBio">
        <title>Novel metabolic attributes of the genus Cyanothece, comprising a group of unicellular nitrogen-fixing Cyanobacteria.</title>
        <authorList>
            <person name="Bandyopadhyay A."/>
            <person name="Elvitigala T."/>
            <person name="Welsh E."/>
            <person name="Stockel J."/>
            <person name="Liberton M."/>
            <person name="Min H."/>
            <person name="Sherman L.A."/>
            <person name="Pakrasi H.B."/>
        </authorList>
    </citation>
    <scope>NUCLEOTIDE SEQUENCE [LARGE SCALE GENOMIC DNA]</scope>
    <source>
        <strain>PCC 7424</strain>
    </source>
</reference>
<sequence>MTVTPIRAKEELKYEIKDISLAPSGRQRIEWAGREMPVVKQIKDRFEKEKPFEGIRLIACCHVTTETANLAIALKAGGADAVLIASNPLSTQDDVAACLVADYGIPVFAIKGEDNATYHRHVQIALDHKPNLIIDDGGDVTATLIQERKDQIADIIGTTEETTTGIVRLAAMLKDGVLSFPAMNVNDADTKHFFDNRYGTGQSTLDGIIRATNVLLAGKTVVVAGYGWCGKGTAMRARGLGANVIVTEINAVKAIEAVMDGFRVMPMIEAAPLGDLFVTVTGNKHVIRPEHFDVMKDGAIVCNSGHFDIEIDLQSLGEKASEIKEVRNFTQQYTLASGKSIVVLGEGRLINLAAAEGHPSAVMDMSFANQALACEYLVKNKGKLEPGIYNIPTEIDQEIARLKLQGMGISIDSLTPEQEAYLNSWTSGT</sequence>